<dbReference type="EMBL" id="AY681317">
    <property type="protein sequence ID" value="AAU93674.1"/>
    <property type="molecule type" value="mRNA"/>
</dbReference>
<dbReference type="SMR" id="Q5Y4W6"/>
<dbReference type="ArachnoServer" id="AS000094">
    <property type="toxin name" value="U2-agatoxin-Ao1u"/>
</dbReference>
<dbReference type="GO" id="GO:0005576">
    <property type="term" value="C:extracellular region"/>
    <property type="evidence" value="ECO:0007669"/>
    <property type="project" value="UniProtKB-SubCell"/>
</dbReference>
<dbReference type="GO" id="GO:0090729">
    <property type="term" value="F:toxin activity"/>
    <property type="evidence" value="ECO:0007669"/>
    <property type="project" value="UniProtKB-KW"/>
</dbReference>
<dbReference type="Pfam" id="PF05980">
    <property type="entry name" value="Toxin_7"/>
    <property type="match status" value="1"/>
</dbReference>
<dbReference type="SUPFAM" id="SSF57059">
    <property type="entry name" value="omega toxin-like"/>
    <property type="match status" value="1"/>
</dbReference>
<protein>
    <recommendedName>
        <fullName>U2-agatoxin-Ao1u</fullName>
        <shortName>U2-AGTX-Ao1u</shortName>
    </recommendedName>
    <alternativeName>
        <fullName>Agel_20</fullName>
    </alternativeName>
</protein>
<organism>
    <name type="scientific">Agelena orientalis</name>
    <name type="common">Funnel-web spider</name>
    <dbReference type="NCBI Taxonomy" id="293813"/>
    <lineage>
        <taxon>Eukaryota</taxon>
        <taxon>Metazoa</taxon>
        <taxon>Ecdysozoa</taxon>
        <taxon>Arthropoda</taxon>
        <taxon>Chelicerata</taxon>
        <taxon>Arachnida</taxon>
        <taxon>Araneae</taxon>
        <taxon>Araneomorphae</taxon>
        <taxon>Entelegynae</taxon>
        <taxon>Agelenidae</taxon>
        <taxon>Agelena</taxon>
    </lineage>
</organism>
<proteinExistence type="evidence at transcript level"/>
<sequence length="68" mass="7458">MKAIISLLLISAMVFSMIEAVPLEEGLQLFEGERGCLPHNRFCNALSGPRCCSGLTCKELNIWASKCL</sequence>
<comment type="function">
    <text evidence="1">Insect active toxin causing rapid but reversible paralysis in crickets. No activity shown in mammals. Does not show effect on mammalian voltage-gated calcium channels (By similarity).</text>
</comment>
<comment type="subcellular location">
    <subcellularLocation>
        <location evidence="1">Secreted</location>
    </subcellularLocation>
</comment>
<comment type="tissue specificity">
    <text>Expressed by the venom gland.</text>
</comment>
<comment type="domain">
    <text evidence="1">The presence of a 'disulfide through disulfide knot' structurally defines this protein as a knottin.</text>
</comment>
<comment type="similarity">
    <text evidence="3">Belongs to the neurotoxin 01 (U2-agtx) family.</text>
</comment>
<feature type="signal peptide" evidence="2">
    <location>
        <begin position="1"/>
        <end position="20"/>
    </location>
</feature>
<feature type="propeptide" id="PRO_5000093639" evidence="2">
    <location>
        <begin position="21"/>
        <end position="34"/>
    </location>
</feature>
<feature type="chain" id="PRO_5000093640" description="U2-agatoxin-Ao1u">
    <location>
        <begin position="35"/>
        <end position="68"/>
    </location>
</feature>
<feature type="disulfide bond" evidence="1">
    <location>
        <begin position="36"/>
        <end position="52"/>
    </location>
</feature>
<feature type="disulfide bond" evidence="1">
    <location>
        <begin position="43"/>
        <end position="57"/>
    </location>
</feature>
<feature type="disulfide bond" evidence="1">
    <location>
        <begin position="51"/>
        <end position="67"/>
    </location>
</feature>
<reference key="1">
    <citation type="journal article" date="2005" name="Proteins">
        <title>A novel strategy for the identification of toxinlike structures in spider venom.</title>
        <authorList>
            <person name="Kozlov S.A."/>
            <person name="Malyavka A."/>
            <person name="McCutchen B."/>
            <person name="Lu A."/>
            <person name="Schepers E."/>
            <person name="Herrmann R."/>
            <person name="Grishin E.V."/>
        </authorList>
    </citation>
    <scope>NUCLEOTIDE SEQUENCE [MRNA]</scope>
    <source>
        <tissue>Venom gland</tissue>
    </source>
</reference>
<keyword id="KW-1015">Disulfide bond</keyword>
<keyword id="KW-0960">Knottin</keyword>
<keyword id="KW-0528">Neurotoxin</keyword>
<keyword id="KW-0964">Secreted</keyword>
<keyword id="KW-0732">Signal</keyword>
<keyword id="KW-0800">Toxin</keyword>
<accession>Q5Y4W6</accession>
<name>TAG2U_AGEOR</name>
<evidence type="ECO:0000250" key="1"/>
<evidence type="ECO:0000255" key="2"/>
<evidence type="ECO:0000305" key="3"/>